<proteinExistence type="evidence at protein level"/>
<reference key="1">
    <citation type="submission" date="2010-11" db="EMBL/GenBank/DDBJ databases">
        <title>A sophorolipid transporter.</title>
        <authorList>
            <person name="Van Bogaert I.N.A."/>
            <person name="Soetaert W."/>
        </authorList>
    </citation>
    <scope>NUCLEOTIDE SEQUENCE [GENOMIC DNA]</scope>
    <source>
        <strain>ATCC 22214 / CBS 6009 / JCM 9596 / NBRC 10243 / NRRL Y-17069</strain>
    </source>
</reference>
<reference key="2">
    <citation type="journal article" date="2013" name="J. Proteome Res.">
        <title>SILAC-based proteome analysis of Starmerella bombicola sophorolipid production.</title>
        <authorList>
            <person name="Ciesielska K."/>
            <person name="Li B."/>
            <person name="Groeneboer S."/>
            <person name="Van Bogaert I."/>
            <person name="Lin Y.C."/>
            <person name="Soetaert W."/>
            <person name="Van de Peer Y."/>
            <person name="Devreese B."/>
        </authorList>
    </citation>
    <scope>IDENTIFICATION BY MASS SPECTROMETRY</scope>
    <scope>INDUCTION</scope>
    <source>
        <strain>ATCC 22214 / CBS 6009 / JCM 9596 / NBRC 10243 / NRRL Y-17069</strain>
    </source>
</reference>
<reference key="3">
    <citation type="journal article" date="2013" name="Mol. Microbiol.">
        <title>The biosynthetic gene cluster for sophorolipids: a biotechnological interesting biosurfactant produced by Starmerella bombicola.</title>
        <authorList>
            <person name="Van Bogaert I.N."/>
            <person name="Holvoet K."/>
            <person name="Roelants S.L."/>
            <person name="Li B."/>
            <person name="Lin Y.C."/>
            <person name="Van de Peer Y."/>
            <person name="Soetaert W."/>
        </authorList>
    </citation>
    <scope>FUNCTION</scope>
</reference>
<dbReference type="EC" id="7.6.2.-"/>
<dbReference type="EMBL" id="HQ660581">
    <property type="protein sequence ID" value="AET14838.1"/>
    <property type="molecule type" value="Genomic_DNA"/>
</dbReference>
<dbReference type="SMR" id="H6TB12"/>
<dbReference type="GO" id="GO:0005743">
    <property type="term" value="C:mitochondrial inner membrane"/>
    <property type="evidence" value="ECO:0007669"/>
    <property type="project" value="TreeGrafter"/>
</dbReference>
<dbReference type="GO" id="GO:0005886">
    <property type="term" value="C:plasma membrane"/>
    <property type="evidence" value="ECO:0007669"/>
    <property type="project" value="UniProtKB-SubCell"/>
</dbReference>
<dbReference type="GO" id="GO:0015421">
    <property type="term" value="F:ABC-type oligopeptide transporter activity"/>
    <property type="evidence" value="ECO:0007669"/>
    <property type="project" value="TreeGrafter"/>
</dbReference>
<dbReference type="GO" id="GO:0005524">
    <property type="term" value="F:ATP binding"/>
    <property type="evidence" value="ECO:0007669"/>
    <property type="project" value="UniProtKB-KW"/>
</dbReference>
<dbReference type="GO" id="GO:0016887">
    <property type="term" value="F:ATP hydrolysis activity"/>
    <property type="evidence" value="ECO:0007669"/>
    <property type="project" value="InterPro"/>
</dbReference>
<dbReference type="GO" id="GO:0090374">
    <property type="term" value="P:oligopeptide export from mitochondrion"/>
    <property type="evidence" value="ECO:0007669"/>
    <property type="project" value="TreeGrafter"/>
</dbReference>
<dbReference type="CDD" id="cd18577">
    <property type="entry name" value="ABC_6TM_Pgp_ABCB1_D1_like"/>
    <property type="match status" value="1"/>
</dbReference>
<dbReference type="CDD" id="cd18578">
    <property type="entry name" value="ABC_6TM_Pgp_ABCB1_D2_like"/>
    <property type="match status" value="1"/>
</dbReference>
<dbReference type="CDD" id="cd03249">
    <property type="entry name" value="ABC_MTABC3_MDL1_MDL2"/>
    <property type="match status" value="2"/>
</dbReference>
<dbReference type="FunFam" id="3.40.50.300:FF:000251">
    <property type="entry name" value="ABC transporter B family member 19"/>
    <property type="match status" value="1"/>
</dbReference>
<dbReference type="FunFam" id="3.40.50.300:FF:000302">
    <property type="entry name" value="ATP-binding cassette subfamily B member 5"/>
    <property type="match status" value="1"/>
</dbReference>
<dbReference type="Gene3D" id="1.20.1560.10">
    <property type="entry name" value="ABC transporter type 1, transmembrane domain"/>
    <property type="match status" value="1"/>
</dbReference>
<dbReference type="Gene3D" id="3.40.50.300">
    <property type="entry name" value="P-loop containing nucleotide triphosphate hydrolases"/>
    <property type="match status" value="2"/>
</dbReference>
<dbReference type="InterPro" id="IPR003593">
    <property type="entry name" value="AAA+_ATPase"/>
</dbReference>
<dbReference type="InterPro" id="IPR011527">
    <property type="entry name" value="ABC1_TM_dom"/>
</dbReference>
<dbReference type="InterPro" id="IPR036640">
    <property type="entry name" value="ABC1_TM_sf"/>
</dbReference>
<dbReference type="InterPro" id="IPR003439">
    <property type="entry name" value="ABC_transporter-like_ATP-bd"/>
</dbReference>
<dbReference type="InterPro" id="IPR017871">
    <property type="entry name" value="ABC_transporter-like_CS"/>
</dbReference>
<dbReference type="InterPro" id="IPR027417">
    <property type="entry name" value="P-loop_NTPase"/>
</dbReference>
<dbReference type="InterPro" id="IPR039421">
    <property type="entry name" value="Type_1_exporter"/>
</dbReference>
<dbReference type="PANTHER" id="PTHR43394:SF11">
    <property type="entry name" value="ATP-BINDING CASSETTE TRANSPORTER"/>
    <property type="match status" value="1"/>
</dbReference>
<dbReference type="PANTHER" id="PTHR43394">
    <property type="entry name" value="ATP-DEPENDENT PERMEASE MDL1, MITOCHONDRIAL"/>
    <property type="match status" value="1"/>
</dbReference>
<dbReference type="Pfam" id="PF00664">
    <property type="entry name" value="ABC_membrane"/>
    <property type="match status" value="2"/>
</dbReference>
<dbReference type="Pfam" id="PF00005">
    <property type="entry name" value="ABC_tran"/>
    <property type="match status" value="2"/>
</dbReference>
<dbReference type="SMART" id="SM00382">
    <property type="entry name" value="AAA"/>
    <property type="match status" value="2"/>
</dbReference>
<dbReference type="SUPFAM" id="SSF90123">
    <property type="entry name" value="ABC transporter transmembrane region"/>
    <property type="match status" value="2"/>
</dbReference>
<dbReference type="SUPFAM" id="SSF52540">
    <property type="entry name" value="P-loop containing nucleoside triphosphate hydrolases"/>
    <property type="match status" value="2"/>
</dbReference>
<dbReference type="PROSITE" id="PS50929">
    <property type="entry name" value="ABC_TM1F"/>
    <property type="match status" value="2"/>
</dbReference>
<dbReference type="PROSITE" id="PS00211">
    <property type="entry name" value="ABC_TRANSPORTER_1"/>
    <property type="match status" value="2"/>
</dbReference>
<dbReference type="PROSITE" id="PS50893">
    <property type="entry name" value="ABC_TRANSPORTER_2"/>
    <property type="match status" value="2"/>
</dbReference>
<protein>
    <recommendedName>
        <fullName evidence="7">Sophorolipid transporter</fullName>
        <ecNumber>7.6.2.-</ecNumber>
    </recommendedName>
</protein>
<name>MDR_STABO</name>
<keyword id="KW-0067">ATP-binding</keyword>
<keyword id="KW-1003">Cell membrane</keyword>
<keyword id="KW-0472">Membrane</keyword>
<keyword id="KW-0547">Nucleotide-binding</keyword>
<keyword id="KW-0677">Repeat</keyword>
<keyword id="KW-1278">Translocase</keyword>
<keyword id="KW-0812">Transmembrane</keyword>
<keyword id="KW-1133">Transmembrane helix</keyword>
<keyword id="KW-0813">Transport</keyword>
<sequence>MVDDIQVEKREKLIETKDKLLEEKLSALDPHEANVLRSQLETKRVATSFFRLFRFCTPLDVFLEILALFFAAVHGAALPMFTLVVGAIFNTFRDFTSYDLKGNEFQHKVNHLSLYFVYIGIGMLGSAFLESFLLVDRGEVLAGRYRKHYLSAVIRQNIAFYDKLGGGEVSTRIINDTNSIQEAISDKLGNVVQGIASFIAATVISFASQWKLACILLSAVGFMVITMGTGATFMAKYQLRSDAIYSQSGATVAEEALSAVRTTVAFGAQPHLAVKYEKVLDRVVKESKRSSYSLGVMLACIWASTFWVYALALWQGSREIVSGSADVGKIIVVITAMLLGSFQLGNIAPNVRFLVKGLTAASILNEAIDRVPVIDGQSIDKGIVPQTKAVGRIELKNVKFRYPSRPDVLVLSDFSLEVPAGSTVALVGASGSGKSTIVGILERFYLPLEGSVTLDGQEISDLNTRWLRQQIGYVQQEPVLFSESIYENISYGLIGTDIEFADEHVKEAKIIQACKDANAWDFIQTLSEGIQTNVGDRGFLLSGGQKQRIAIARAIVSDPKILLLDEATSALDTKSEGIVQDALDKAAEGRTTIVVAHRLSTIKDANKIVVMSKGNVIEQGTHNELIQREGPYKALVDAQRVTKAKSTNVEVLDIEALDISPLDSLNEKFNPKDVSTLSVHSAGTQTTQPPEYQENDIPGVRNPPHSTLMTNTKLVWGLNRKEWGYILIGSLASIILGYCYPAMAIITGQTTGSMVLPPSEYGKMRHVVNIMGWWYFFVGCISFMTAFITIAALSLASDKLVKNIRLALFRQLMRMDIAFFDHKNNTPGALTSILAKEAKMIEGLSGATLGQIQQSLVTLIGGIVTGIPFNWRIGLVATSVVPVMLVCGFVRVWVLTQLSDRAREVYERSGSMASEYTSAVRTVQSLTRELDVVVKYTKTVDSQIFSSRIAIARSALYYALSEGMTPWVVALVFWWGSTVMRRGEASVAGYMTVFMAIITGSQAAGQIFSYAPNMNSAKDAARNIYRILTATPSIDVWSEEGYVAPEESVRGDIEFRHVNFRYPTRPQVPVLQDLNLTVKKGQYIALVGASGCGKSTTIGLVERFYDPLAGQVLFDGKDLREYNLNALRSHIALVQQEPMLYSGTLRENILMGWSGPESEVTQEMIEDAARKANIHEFIMSLPDGYETLSGSRGSLLSGGQKQRIAIARALIRNPKVLLLDEATSALDSESEKVVQAALDAAAKGRTTIAVAHRLSTIQKADVIYVFSGGRIVEQGDHQSLLELNGWYAELVNLQGLGEI</sequence>
<accession>H6TB12</accession>
<organism>
    <name type="scientific">Starmerella bombicola</name>
    <name type="common">Yeast</name>
    <name type="synonym">Candida bombicola</name>
    <dbReference type="NCBI Taxonomy" id="75736"/>
    <lineage>
        <taxon>Eukaryota</taxon>
        <taxon>Fungi</taxon>
        <taxon>Dikarya</taxon>
        <taxon>Ascomycota</taxon>
        <taxon>Saccharomycotina</taxon>
        <taxon>Dipodascomycetes</taxon>
        <taxon>Dipodascales</taxon>
        <taxon>Trichomonascaceae</taxon>
        <taxon>Starmerella</taxon>
    </lineage>
</organism>
<gene>
    <name type="primary">mdr</name>
</gene>
<evidence type="ECO:0000255" key="1"/>
<evidence type="ECO:0000255" key="2">
    <source>
        <dbReference type="PROSITE-ProRule" id="PRU00434"/>
    </source>
</evidence>
<evidence type="ECO:0000255" key="3">
    <source>
        <dbReference type="PROSITE-ProRule" id="PRU00441"/>
    </source>
</evidence>
<evidence type="ECO:0000256" key="4">
    <source>
        <dbReference type="SAM" id="MobiDB-lite"/>
    </source>
</evidence>
<evidence type="ECO:0000269" key="5">
    <source>
    </source>
</evidence>
<evidence type="ECO:0000269" key="6">
    <source>
    </source>
</evidence>
<evidence type="ECO:0000303" key="7">
    <source>
    </source>
</evidence>
<evidence type="ECO:0000305" key="8"/>
<evidence type="ECO:0000305" key="9">
    <source>
    </source>
</evidence>
<feature type="chain" id="PRO_0000443100" description="Sophorolipid transporter">
    <location>
        <begin position="1"/>
        <end position="1299"/>
    </location>
</feature>
<feature type="topological domain" description="Cytoplasmic" evidence="8">
    <location>
        <begin position="1"/>
        <end position="64"/>
    </location>
</feature>
<feature type="transmembrane region" description="Helical" evidence="3">
    <location>
        <begin position="65"/>
        <end position="85"/>
    </location>
</feature>
<feature type="topological domain" description="Extracellular" evidence="8">
    <location>
        <begin position="86"/>
        <end position="114"/>
    </location>
</feature>
<feature type="transmembrane region" description="Helical" evidence="3">
    <location>
        <begin position="115"/>
        <end position="135"/>
    </location>
</feature>
<feature type="topological domain" description="Cytoplasmic" evidence="8">
    <location>
        <begin position="136"/>
        <end position="187"/>
    </location>
</feature>
<feature type="transmembrane region" description="Helical" evidence="3">
    <location>
        <begin position="188"/>
        <end position="208"/>
    </location>
</feature>
<feature type="topological domain" description="Extracellular" evidence="8">
    <location>
        <begin position="209"/>
        <end position="214"/>
    </location>
</feature>
<feature type="transmembrane region" description="Helical" evidence="3">
    <location>
        <begin position="215"/>
        <end position="235"/>
    </location>
</feature>
<feature type="topological domain" description="Cytoplasmic" evidence="8">
    <location>
        <begin position="236"/>
        <end position="293"/>
    </location>
</feature>
<feature type="transmembrane region" description="Helical" evidence="3">
    <location>
        <begin position="294"/>
        <end position="314"/>
    </location>
</feature>
<feature type="topological domain" description="Extracellular" evidence="8">
    <location>
        <begin position="315"/>
        <end position="326"/>
    </location>
</feature>
<feature type="transmembrane region" description="Helical" evidence="3">
    <location>
        <begin position="327"/>
        <end position="347"/>
    </location>
</feature>
<feature type="topological domain" description="Cytoplasmic" evidence="8">
    <location>
        <begin position="348"/>
        <end position="725"/>
    </location>
</feature>
<feature type="transmembrane region" description="Helical" evidence="3">
    <location>
        <begin position="726"/>
        <end position="746"/>
    </location>
</feature>
<feature type="topological domain" description="Extracellular" evidence="8">
    <location>
        <begin position="747"/>
        <end position="769"/>
    </location>
</feature>
<feature type="transmembrane region" description="Helical" evidence="3">
    <location>
        <begin position="770"/>
        <end position="790"/>
    </location>
</feature>
<feature type="topological domain" description="Cytoplasmic" evidence="8">
    <location>
        <begin position="791"/>
        <end position="848"/>
    </location>
</feature>
<feature type="transmembrane region" description="Helical" evidence="3">
    <location>
        <begin position="849"/>
        <end position="869"/>
    </location>
</feature>
<feature type="topological domain" description="Extracellular" evidence="8">
    <location>
        <begin position="870"/>
        <end position="874"/>
    </location>
</feature>
<feature type="transmembrane region" description="Helical" evidence="3">
    <location>
        <begin position="875"/>
        <end position="895"/>
    </location>
</feature>
<feature type="topological domain" description="Cytoplasmic" evidence="8">
    <location>
        <begin position="896"/>
        <end position="954"/>
    </location>
</feature>
<feature type="transmembrane region" description="Helical" evidence="3">
    <location>
        <begin position="955"/>
        <end position="975"/>
    </location>
</feature>
<feature type="topological domain" description="Extracellular" evidence="8">
    <location>
        <begin position="976"/>
        <end position="987"/>
    </location>
</feature>
<feature type="transmembrane region" description="Helical" evidence="3">
    <location>
        <begin position="988"/>
        <end position="1008"/>
    </location>
</feature>
<feature type="topological domain" description="Cytoplasmic" evidence="8">
    <location>
        <begin position="1009"/>
        <end position="1299"/>
    </location>
</feature>
<feature type="domain" description="ABC transmembrane type-1 1" evidence="3">
    <location>
        <begin position="65"/>
        <end position="356"/>
    </location>
</feature>
<feature type="domain" description="ABC transporter 1" evidence="2">
    <location>
        <begin position="393"/>
        <end position="638"/>
    </location>
</feature>
<feature type="domain" description="ABC transmembrane type-1 2" evidence="3">
    <location>
        <begin position="727"/>
        <end position="1016"/>
    </location>
</feature>
<feature type="domain" description="ABC transporter 2" evidence="2">
    <location>
        <begin position="1053"/>
        <end position="1293"/>
    </location>
</feature>
<feature type="region of interest" description="Disordered" evidence="4">
    <location>
        <begin position="681"/>
        <end position="703"/>
    </location>
</feature>
<feature type="compositionally biased region" description="Polar residues" evidence="4">
    <location>
        <begin position="681"/>
        <end position="690"/>
    </location>
</feature>
<feature type="binding site" evidence="2">
    <location>
        <begin position="428"/>
        <end position="435"/>
    </location>
    <ligand>
        <name>ATP</name>
        <dbReference type="ChEBI" id="CHEBI:30616"/>
    </ligand>
</feature>
<feature type="binding site" evidence="2">
    <location>
        <begin position="1088"/>
        <end position="1095"/>
    </location>
    <ligand>
        <name>ATP</name>
        <dbReference type="ChEBI" id="CHEBI:30616"/>
    </ligand>
</feature>
<comment type="function">
    <text evidence="5">Transports acidic acylated and non-acylated sophorolipids (SLs) into the extracellular space, where they can be lactonized by lactone esterase.</text>
</comment>
<comment type="subcellular location">
    <subcellularLocation>
        <location evidence="9">Cell membrane</location>
        <topology evidence="1">Multi-pass membrane protein</topology>
    </subcellularLocation>
</comment>
<comment type="induction">
    <text evidence="6">Induced in early stationary phase (at protein level).</text>
</comment>
<comment type="similarity">
    <text evidence="8">Belongs to the ABC transporter superfamily. ABCB family. Multidrug resistance exporter (TC 3.A.1.201) subfamily.</text>
</comment>